<comment type="function">
    <text evidence="1">Catalyzes the specific phosphorylation of the 3-hydroxyl group of shikimic acid using ATP as a cosubstrate.</text>
</comment>
<comment type="catalytic activity">
    <reaction evidence="1">
        <text>shikimate + ATP = 3-phosphoshikimate + ADP + H(+)</text>
        <dbReference type="Rhea" id="RHEA:13121"/>
        <dbReference type="ChEBI" id="CHEBI:15378"/>
        <dbReference type="ChEBI" id="CHEBI:30616"/>
        <dbReference type="ChEBI" id="CHEBI:36208"/>
        <dbReference type="ChEBI" id="CHEBI:145989"/>
        <dbReference type="ChEBI" id="CHEBI:456216"/>
        <dbReference type="EC" id="2.7.1.71"/>
    </reaction>
</comment>
<comment type="cofactor">
    <cofactor evidence="1">
        <name>Mg(2+)</name>
        <dbReference type="ChEBI" id="CHEBI:18420"/>
    </cofactor>
    <text evidence="1">Binds 1 Mg(2+) ion per subunit.</text>
</comment>
<comment type="pathway">
    <text evidence="1">Metabolic intermediate biosynthesis; chorismate biosynthesis; chorismate from D-erythrose 4-phosphate and phosphoenolpyruvate: step 5/7.</text>
</comment>
<comment type="subunit">
    <text evidence="1">Monomer.</text>
</comment>
<comment type="subcellular location">
    <subcellularLocation>
        <location evidence="1">Cytoplasm</location>
    </subcellularLocation>
</comment>
<comment type="similarity">
    <text evidence="1">Belongs to the shikimate kinase family.</text>
</comment>
<comment type="sequence caution" evidence="2">
    <conflict type="erroneous initiation">
        <sequence resource="EMBL-CDS" id="ABC37525"/>
    </conflict>
</comment>
<sequence length="184" mass="20731">MQARDPHVNVIFVGLMGAGKTTVGRAVARRLDRPFFDSDHEIEARTGARIPVIFELEGESGFRDREAQMIAELTQRENIVLATGGGAILRPENRKLLHERGLVVYLRANPHDLWLRTRKDKNRPLLQTDDPKAKLEALYEARDPLYRECAHFVIETGRPSVNGLVNMVLMQLEMAGIVAKPLQA</sequence>
<dbReference type="EC" id="2.7.1.71" evidence="1"/>
<dbReference type="EMBL" id="CP000086">
    <property type="protein sequence ID" value="ABC37525.1"/>
    <property type="status" value="ALT_INIT"/>
    <property type="molecule type" value="Genomic_DNA"/>
</dbReference>
<dbReference type="RefSeq" id="WP_009888477.1">
    <property type="nucleotide sequence ID" value="NZ_CP008786.1"/>
</dbReference>
<dbReference type="SMR" id="Q2SU71"/>
<dbReference type="GeneID" id="45122711"/>
<dbReference type="KEGG" id="bte:BTH_I3024"/>
<dbReference type="HOGENOM" id="CLU_057607_2_2_4"/>
<dbReference type="UniPathway" id="UPA00053">
    <property type="reaction ID" value="UER00088"/>
</dbReference>
<dbReference type="Proteomes" id="UP000001930">
    <property type="component" value="Chromosome I"/>
</dbReference>
<dbReference type="GO" id="GO:0005829">
    <property type="term" value="C:cytosol"/>
    <property type="evidence" value="ECO:0007669"/>
    <property type="project" value="TreeGrafter"/>
</dbReference>
<dbReference type="GO" id="GO:0005524">
    <property type="term" value="F:ATP binding"/>
    <property type="evidence" value="ECO:0007669"/>
    <property type="project" value="UniProtKB-UniRule"/>
</dbReference>
<dbReference type="GO" id="GO:0000287">
    <property type="term" value="F:magnesium ion binding"/>
    <property type="evidence" value="ECO:0007669"/>
    <property type="project" value="UniProtKB-UniRule"/>
</dbReference>
<dbReference type="GO" id="GO:0004765">
    <property type="term" value="F:shikimate kinase activity"/>
    <property type="evidence" value="ECO:0007669"/>
    <property type="project" value="UniProtKB-UniRule"/>
</dbReference>
<dbReference type="GO" id="GO:0008652">
    <property type="term" value="P:amino acid biosynthetic process"/>
    <property type="evidence" value="ECO:0007669"/>
    <property type="project" value="UniProtKB-KW"/>
</dbReference>
<dbReference type="GO" id="GO:0009073">
    <property type="term" value="P:aromatic amino acid family biosynthetic process"/>
    <property type="evidence" value="ECO:0007669"/>
    <property type="project" value="UniProtKB-KW"/>
</dbReference>
<dbReference type="GO" id="GO:0009423">
    <property type="term" value="P:chorismate biosynthetic process"/>
    <property type="evidence" value="ECO:0007669"/>
    <property type="project" value="UniProtKB-UniRule"/>
</dbReference>
<dbReference type="CDD" id="cd00464">
    <property type="entry name" value="SK"/>
    <property type="match status" value="1"/>
</dbReference>
<dbReference type="Gene3D" id="3.40.50.300">
    <property type="entry name" value="P-loop containing nucleotide triphosphate hydrolases"/>
    <property type="match status" value="1"/>
</dbReference>
<dbReference type="HAMAP" id="MF_00109">
    <property type="entry name" value="Shikimate_kinase"/>
    <property type="match status" value="1"/>
</dbReference>
<dbReference type="InterPro" id="IPR027417">
    <property type="entry name" value="P-loop_NTPase"/>
</dbReference>
<dbReference type="InterPro" id="IPR031322">
    <property type="entry name" value="Shikimate/glucono_kinase"/>
</dbReference>
<dbReference type="InterPro" id="IPR000623">
    <property type="entry name" value="Shikimate_kinase/TSH1"/>
</dbReference>
<dbReference type="InterPro" id="IPR023000">
    <property type="entry name" value="Shikimate_kinase_CS"/>
</dbReference>
<dbReference type="PANTHER" id="PTHR21087">
    <property type="entry name" value="SHIKIMATE KINASE"/>
    <property type="match status" value="1"/>
</dbReference>
<dbReference type="PANTHER" id="PTHR21087:SF16">
    <property type="entry name" value="SHIKIMATE KINASE 1, CHLOROPLASTIC"/>
    <property type="match status" value="1"/>
</dbReference>
<dbReference type="Pfam" id="PF01202">
    <property type="entry name" value="SKI"/>
    <property type="match status" value="1"/>
</dbReference>
<dbReference type="PRINTS" id="PR01100">
    <property type="entry name" value="SHIKIMTKNASE"/>
</dbReference>
<dbReference type="SUPFAM" id="SSF52540">
    <property type="entry name" value="P-loop containing nucleoside triphosphate hydrolases"/>
    <property type="match status" value="1"/>
</dbReference>
<dbReference type="PROSITE" id="PS01128">
    <property type="entry name" value="SHIKIMATE_KINASE"/>
    <property type="match status" value="1"/>
</dbReference>
<name>AROK_BURTA</name>
<keyword id="KW-0028">Amino-acid biosynthesis</keyword>
<keyword id="KW-0057">Aromatic amino acid biosynthesis</keyword>
<keyword id="KW-0067">ATP-binding</keyword>
<keyword id="KW-0963">Cytoplasm</keyword>
<keyword id="KW-0418">Kinase</keyword>
<keyword id="KW-0460">Magnesium</keyword>
<keyword id="KW-0479">Metal-binding</keyword>
<keyword id="KW-0547">Nucleotide-binding</keyword>
<keyword id="KW-0808">Transferase</keyword>
<reference key="1">
    <citation type="journal article" date="2005" name="BMC Genomics">
        <title>Bacterial genome adaptation to niches: divergence of the potential virulence genes in three Burkholderia species of different survival strategies.</title>
        <authorList>
            <person name="Kim H.S."/>
            <person name="Schell M.A."/>
            <person name="Yu Y."/>
            <person name="Ulrich R.L."/>
            <person name="Sarria S.H."/>
            <person name="Nierman W.C."/>
            <person name="DeShazer D."/>
        </authorList>
    </citation>
    <scope>NUCLEOTIDE SEQUENCE [LARGE SCALE GENOMIC DNA]</scope>
    <source>
        <strain>ATCC 700388 / DSM 13276 / CCUG 48851 / CIP 106301 / E264</strain>
    </source>
</reference>
<feature type="chain" id="PRO_0000237861" description="Shikimate kinase">
    <location>
        <begin position="1"/>
        <end position="184"/>
    </location>
</feature>
<feature type="binding site" evidence="1">
    <location>
        <begin position="17"/>
        <end position="22"/>
    </location>
    <ligand>
        <name>ATP</name>
        <dbReference type="ChEBI" id="CHEBI:30616"/>
    </ligand>
</feature>
<feature type="binding site" evidence="1">
    <location>
        <position position="21"/>
    </location>
    <ligand>
        <name>Mg(2+)</name>
        <dbReference type="ChEBI" id="CHEBI:18420"/>
    </ligand>
</feature>
<feature type="binding site" evidence="1">
    <location>
        <position position="39"/>
    </location>
    <ligand>
        <name>substrate</name>
    </ligand>
</feature>
<feature type="binding site" evidence="1">
    <location>
        <position position="63"/>
    </location>
    <ligand>
        <name>substrate</name>
    </ligand>
</feature>
<feature type="binding site" evidence="1">
    <location>
        <position position="85"/>
    </location>
    <ligand>
        <name>substrate</name>
    </ligand>
</feature>
<feature type="binding site" evidence="1">
    <location>
        <position position="123"/>
    </location>
    <ligand>
        <name>ATP</name>
        <dbReference type="ChEBI" id="CHEBI:30616"/>
    </ligand>
</feature>
<feature type="binding site" evidence="1">
    <location>
        <position position="142"/>
    </location>
    <ligand>
        <name>substrate</name>
    </ligand>
</feature>
<organism>
    <name type="scientific">Burkholderia thailandensis (strain ATCC 700388 / DSM 13276 / CCUG 48851 / CIP 106301 / E264)</name>
    <dbReference type="NCBI Taxonomy" id="271848"/>
    <lineage>
        <taxon>Bacteria</taxon>
        <taxon>Pseudomonadati</taxon>
        <taxon>Pseudomonadota</taxon>
        <taxon>Betaproteobacteria</taxon>
        <taxon>Burkholderiales</taxon>
        <taxon>Burkholderiaceae</taxon>
        <taxon>Burkholderia</taxon>
        <taxon>pseudomallei group</taxon>
    </lineage>
</organism>
<protein>
    <recommendedName>
        <fullName evidence="1">Shikimate kinase</fullName>
        <shortName evidence="1">SK</shortName>
        <ecNumber evidence="1">2.7.1.71</ecNumber>
    </recommendedName>
</protein>
<accession>Q2SU71</accession>
<proteinExistence type="inferred from homology"/>
<evidence type="ECO:0000255" key="1">
    <source>
        <dbReference type="HAMAP-Rule" id="MF_00109"/>
    </source>
</evidence>
<evidence type="ECO:0000305" key="2"/>
<gene>
    <name evidence="1" type="primary">aroK</name>
    <name type="ordered locus">BTH_I3024</name>
</gene>